<evidence type="ECO:0000255" key="1"/>
<evidence type="ECO:0000256" key="2">
    <source>
        <dbReference type="SAM" id="MobiDB-lite"/>
    </source>
</evidence>
<evidence type="ECO:0000305" key="3"/>
<gene>
    <name type="ORF">CG13601</name>
</gene>
<keyword id="KW-0175">Coiled coil</keyword>
<keyword id="KW-1185">Reference proteome</keyword>
<accession>Q9VCG3</accession>
<sequence>MVIGVFPAAKLGILAIKQVSKPIANVIKSNAKSSPFFRKYICMPPAQFYNWVEVKTKMWALNMGGRVNVPPLNEAMAIELGANLLGEFIIFSIGAGLLIFEYSRQTIKENKKNELAQSEKMELTNMLTEMNFRLERQDAQIREMTRVLADLDSRNIFRWHKEPIQEYVPFDPDTPDQSASARNPKKFDSLYDPQGGMAFRALHFLDTQIFVDGRNRKAKEALQHLDEVAVQLEQSLGEAATVAVASSLPTKAADL</sequence>
<feature type="chain" id="PRO_0000220765" description="Putative OPA3-like protein CG13603">
    <location>
        <begin position="1"/>
        <end position="255"/>
    </location>
</feature>
<feature type="region of interest" description="Disordered" evidence="2">
    <location>
        <begin position="168"/>
        <end position="187"/>
    </location>
</feature>
<feature type="coiled-coil region" evidence="1">
    <location>
        <begin position="108"/>
        <end position="154"/>
    </location>
</feature>
<feature type="coiled-coil region" evidence="1">
    <location>
        <begin position="212"/>
        <end position="241"/>
    </location>
</feature>
<proteinExistence type="evidence at transcript level"/>
<protein>
    <recommendedName>
        <fullName>Putative OPA3-like protein CG13603</fullName>
    </recommendedName>
</protein>
<comment type="similarity">
    <text evidence="3">Belongs to the OPA3 family.</text>
</comment>
<dbReference type="EMBL" id="AE014297">
    <property type="protein sequence ID" value="AAF56203.1"/>
    <property type="molecule type" value="Genomic_DNA"/>
</dbReference>
<dbReference type="EMBL" id="AY118558">
    <property type="protein sequence ID" value="AAM49927.1"/>
    <property type="molecule type" value="mRNA"/>
</dbReference>
<dbReference type="RefSeq" id="NP_651192.1">
    <property type="nucleotide sequence ID" value="NM_142935.2"/>
</dbReference>
<dbReference type="SMR" id="Q9VCG3"/>
<dbReference type="BioGRID" id="67762">
    <property type="interactions" value="1"/>
</dbReference>
<dbReference type="FunCoup" id="Q9VCG3">
    <property type="interactions" value="1012"/>
</dbReference>
<dbReference type="IntAct" id="Q9VCG3">
    <property type="interactions" value="1"/>
</dbReference>
<dbReference type="PaxDb" id="7227-FBpp0083908"/>
<dbReference type="DNASU" id="42826"/>
<dbReference type="EnsemblMetazoa" id="FBtr0084522">
    <property type="protein sequence ID" value="FBpp0083908"/>
    <property type="gene ID" value="FBgn0039126"/>
</dbReference>
<dbReference type="GeneID" id="42826"/>
<dbReference type="KEGG" id="dme:Dmel_CG13601"/>
<dbReference type="UCSC" id="CG13601-RA">
    <property type="organism name" value="d. melanogaster"/>
</dbReference>
<dbReference type="AGR" id="FB:FBgn0039126"/>
<dbReference type="FlyBase" id="FBgn0039126">
    <property type="gene designation" value="CG13601"/>
</dbReference>
<dbReference type="VEuPathDB" id="VectorBase:FBgn0039126"/>
<dbReference type="eggNOG" id="KOG3335">
    <property type="taxonomic scope" value="Eukaryota"/>
</dbReference>
<dbReference type="GeneTree" id="ENSGT00390000009795"/>
<dbReference type="HOGENOM" id="CLU_074707_5_0_1"/>
<dbReference type="InParanoid" id="Q9VCG3"/>
<dbReference type="OMA" id="MEKMQLT"/>
<dbReference type="OrthoDB" id="2129069at2759"/>
<dbReference type="PhylomeDB" id="Q9VCG3"/>
<dbReference type="BioGRID-ORCS" id="42826">
    <property type="hits" value="0 hits in 1 CRISPR screen"/>
</dbReference>
<dbReference type="GenomeRNAi" id="42826"/>
<dbReference type="PRO" id="PR:Q9VCG3"/>
<dbReference type="Proteomes" id="UP000000803">
    <property type="component" value="Chromosome 3R"/>
</dbReference>
<dbReference type="Bgee" id="FBgn0039126">
    <property type="expression patterns" value="Expressed in secondary oocyte and 105 other cell types or tissues"/>
</dbReference>
<dbReference type="ExpressionAtlas" id="Q9VCG3">
    <property type="expression patterns" value="baseline and differential"/>
</dbReference>
<dbReference type="GO" id="GO:0005739">
    <property type="term" value="C:mitochondrion"/>
    <property type="evidence" value="ECO:0000250"/>
    <property type="project" value="FlyBase"/>
</dbReference>
<dbReference type="GO" id="GO:0019216">
    <property type="term" value="P:regulation of lipid metabolic process"/>
    <property type="evidence" value="ECO:0000318"/>
    <property type="project" value="GO_Central"/>
</dbReference>
<dbReference type="InterPro" id="IPR010754">
    <property type="entry name" value="OPA3-like"/>
</dbReference>
<dbReference type="PANTHER" id="PTHR12499:SF0">
    <property type="entry name" value="OPTIC ATROPHY 3 PROTEIN"/>
    <property type="match status" value="1"/>
</dbReference>
<dbReference type="PANTHER" id="PTHR12499">
    <property type="entry name" value="OPTIC ATROPHY 3 PROTEIN OPA3"/>
    <property type="match status" value="1"/>
</dbReference>
<dbReference type="Pfam" id="PF07047">
    <property type="entry name" value="OPA3"/>
    <property type="match status" value="1"/>
</dbReference>
<name>OPA32_DROME</name>
<organism>
    <name type="scientific">Drosophila melanogaster</name>
    <name type="common">Fruit fly</name>
    <dbReference type="NCBI Taxonomy" id="7227"/>
    <lineage>
        <taxon>Eukaryota</taxon>
        <taxon>Metazoa</taxon>
        <taxon>Ecdysozoa</taxon>
        <taxon>Arthropoda</taxon>
        <taxon>Hexapoda</taxon>
        <taxon>Insecta</taxon>
        <taxon>Pterygota</taxon>
        <taxon>Neoptera</taxon>
        <taxon>Endopterygota</taxon>
        <taxon>Diptera</taxon>
        <taxon>Brachycera</taxon>
        <taxon>Muscomorpha</taxon>
        <taxon>Ephydroidea</taxon>
        <taxon>Drosophilidae</taxon>
        <taxon>Drosophila</taxon>
        <taxon>Sophophora</taxon>
    </lineage>
</organism>
<reference key="1">
    <citation type="journal article" date="2000" name="Science">
        <title>The genome sequence of Drosophila melanogaster.</title>
        <authorList>
            <person name="Adams M.D."/>
            <person name="Celniker S.E."/>
            <person name="Holt R.A."/>
            <person name="Evans C.A."/>
            <person name="Gocayne J.D."/>
            <person name="Amanatides P.G."/>
            <person name="Scherer S.E."/>
            <person name="Li P.W."/>
            <person name="Hoskins R.A."/>
            <person name="Galle R.F."/>
            <person name="George R.A."/>
            <person name="Lewis S.E."/>
            <person name="Richards S."/>
            <person name="Ashburner M."/>
            <person name="Henderson S.N."/>
            <person name="Sutton G.G."/>
            <person name="Wortman J.R."/>
            <person name="Yandell M.D."/>
            <person name="Zhang Q."/>
            <person name="Chen L.X."/>
            <person name="Brandon R.C."/>
            <person name="Rogers Y.-H.C."/>
            <person name="Blazej R.G."/>
            <person name="Champe M."/>
            <person name="Pfeiffer B.D."/>
            <person name="Wan K.H."/>
            <person name="Doyle C."/>
            <person name="Baxter E.G."/>
            <person name="Helt G."/>
            <person name="Nelson C.R."/>
            <person name="Miklos G.L.G."/>
            <person name="Abril J.F."/>
            <person name="Agbayani A."/>
            <person name="An H.-J."/>
            <person name="Andrews-Pfannkoch C."/>
            <person name="Baldwin D."/>
            <person name="Ballew R.M."/>
            <person name="Basu A."/>
            <person name="Baxendale J."/>
            <person name="Bayraktaroglu L."/>
            <person name="Beasley E.M."/>
            <person name="Beeson K.Y."/>
            <person name="Benos P.V."/>
            <person name="Berman B.P."/>
            <person name="Bhandari D."/>
            <person name="Bolshakov S."/>
            <person name="Borkova D."/>
            <person name="Botchan M.R."/>
            <person name="Bouck J."/>
            <person name="Brokstein P."/>
            <person name="Brottier P."/>
            <person name="Burtis K.C."/>
            <person name="Busam D.A."/>
            <person name="Butler H."/>
            <person name="Cadieu E."/>
            <person name="Center A."/>
            <person name="Chandra I."/>
            <person name="Cherry J.M."/>
            <person name="Cawley S."/>
            <person name="Dahlke C."/>
            <person name="Davenport L.B."/>
            <person name="Davies P."/>
            <person name="de Pablos B."/>
            <person name="Delcher A."/>
            <person name="Deng Z."/>
            <person name="Mays A.D."/>
            <person name="Dew I."/>
            <person name="Dietz S.M."/>
            <person name="Dodson K."/>
            <person name="Doup L.E."/>
            <person name="Downes M."/>
            <person name="Dugan-Rocha S."/>
            <person name="Dunkov B.C."/>
            <person name="Dunn P."/>
            <person name="Durbin K.J."/>
            <person name="Evangelista C.C."/>
            <person name="Ferraz C."/>
            <person name="Ferriera S."/>
            <person name="Fleischmann W."/>
            <person name="Fosler C."/>
            <person name="Gabrielian A.E."/>
            <person name="Garg N.S."/>
            <person name="Gelbart W.M."/>
            <person name="Glasser K."/>
            <person name="Glodek A."/>
            <person name="Gong F."/>
            <person name="Gorrell J.H."/>
            <person name="Gu Z."/>
            <person name="Guan P."/>
            <person name="Harris M."/>
            <person name="Harris N.L."/>
            <person name="Harvey D.A."/>
            <person name="Heiman T.J."/>
            <person name="Hernandez J.R."/>
            <person name="Houck J."/>
            <person name="Hostin D."/>
            <person name="Houston K.A."/>
            <person name="Howland T.J."/>
            <person name="Wei M.-H."/>
            <person name="Ibegwam C."/>
            <person name="Jalali M."/>
            <person name="Kalush F."/>
            <person name="Karpen G.H."/>
            <person name="Ke Z."/>
            <person name="Kennison J.A."/>
            <person name="Ketchum K.A."/>
            <person name="Kimmel B.E."/>
            <person name="Kodira C.D."/>
            <person name="Kraft C.L."/>
            <person name="Kravitz S."/>
            <person name="Kulp D."/>
            <person name="Lai Z."/>
            <person name="Lasko P."/>
            <person name="Lei Y."/>
            <person name="Levitsky A.A."/>
            <person name="Li J.H."/>
            <person name="Li Z."/>
            <person name="Liang Y."/>
            <person name="Lin X."/>
            <person name="Liu X."/>
            <person name="Mattei B."/>
            <person name="McIntosh T.C."/>
            <person name="McLeod M.P."/>
            <person name="McPherson D."/>
            <person name="Merkulov G."/>
            <person name="Milshina N.V."/>
            <person name="Mobarry C."/>
            <person name="Morris J."/>
            <person name="Moshrefi A."/>
            <person name="Mount S.M."/>
            <person name="Moy M."/>
            <person name="Murphy B."/>
            <person name="Murphy L."/>
            <person name="Muzny D.M."/>
            <person name="Nelson D.L."/>
            <person name="Nelson D.R."/>
            <person name="Nelson K.A."/>
            <person name="Nixon K."/>
            <person name="Nusskern D.R."/>
            <person name="Pacleb J.M."/>
            <person name="Palazzolo M."/>
            <person name="Pittman G.S."/>
            <person name="Pan S."/>
            <person name="Pollard J."/>
            <person name="Puri V."/>
            <person name="Reese M.G."/>
            <person name="Reinert K."/>
            <person name="Remington K."/>
            <person name="Saunders R.D.C."/>
            <person name="Scheeler F."/>
            <person name="Shen H."/>
            <person name="Shue B.C."/>
            <person name="Siden-Kiamos I."/>
            <person name="Simpson M."/>
            <person name="Skupski M.P."/>
            <person name="Smith T.J."/>
            <person name="Spier E."/>
            <person name="Spradling A.C."/>
            <person name="Stapleton M."/>
            <person name="Strong R."/>
            <person name="Sun E."/>
            <person name="Svirskas R."/>
            <person name="Tector C."/>
            <person name="Turner R."/>
            <person name="Venter E."/>
            <person name="Wang A.H."/>
            <person name="Wang X."/>
            <person name="Wang Z.-Y."/>
            <person name="Wassarman D.A."/>
            <person name="Weinstock G.M."/>
            <person name="Weissenbach J."/>
            <person name="Williams S.M."/>
            <person name="Woodage T."/>
            <person name="Worley K.C."/>
            <person name="Wu D."/>
            <person name="Yang S."/>
            <person name="Yao Q.A."/>
            <person name="Ye J."/>
            <person name="Yeh R.-F."/>
            <person name="Zaveri J.S."/>
            <person name="Zhan M."/>
            <person name="Zhang G."/>
            <person name="Zhao Q."/>
            <person name="Zheng L."/>
            <person name="Zheng X.H."/>
            <person name="Zhong F.N."/>
            <person name="Zhong W."/>
            <person name="Zhou X."/>
            <person name="Zhu S.C."/>
            <person name="Zhu X."/>
            <person name="Smith H.O."/>
            <person name="Gibbs R.A."/>
            <person name="Myers E.W."/>
            <person name="Rubin G.M."/>
            <person name="Venter J.C."/>
        </authorList>
    </citation>
    <scope>NUCLEOTIDE SEQUENCE [LARGE SCALE GENOMIC DNA]</scope>
    <source>
        <strain>Berkeley</strain>
    </source>
</reference>
<reference key="2">
    <citation type="journal article" date="2002" name="Genome Biol.">
        <title>Annotation of the Drosophila melanogaster euchromatic genome: a systematic review.</title>
        <authorList>
            <person name="Misra S."/>
            <person name="Crosby M.A."/>
            <person name="Mungall C.J."/>
            <person name="Matthews B.B."/>
            <person name="Campbell K.S."/>
            <person name="Hradecky P."/>
            <person name="Huang Y."/>
            <person name="Kaminker J.S."/>
            <person name="Millburn G.H."/>
            <person name="Prochnik S.E."/>
            <person name="Smith C.D."/>
            <person name="Tupy J.L."/>
            <person name="Whitfield E.J."/>
            <person name="Bayraktaroglu L."/>
            <person name="Berman B.P."/>
            <person name="Bettencourt B.R."/>
            <person name="Celniker S.E."/>
            <person name="de Grey A.D.N.J."/>
            <person name="Drysdale R.A."/>
            <person name="Harris N.L."/>
            <person name="Richter J."/>
            <person name="Russo S."/>
            <person name="Schroeder A.J."/>
            <person name="Shu S.Q."/>
            <person name="Stapleton M."/>
            <person name="Yamada C."/>
            <person name="Ashburner M."/>
            <person name="Gelbart W.M."/>
            <person name="Rubin G.M."/>
            <person name="Lewis S.E."/>
        </authorList>
    </citation>
    <scope>GENOME REANNOTATION</scope>
    <source>
        <strain>Berkeley</strain>
    </source>
</reference>
<reference key="3">
    <citation type="submission" date="2003-01" db="EMBL/GenBank/DDBJ databases">
        <authorList>
            <person name="Stapleton M."/>
            <person name="Brokstein P."/>
            <person name="Hong L."/>
            <person name="Agbayani A."/>
            <person name="Carlson J.W."/>
            <person name="Champe M."/>
            <person name="Chavez C."/>
            <person name="Dorsett V."/>
            <person name="Dresnek D."/>
            <person name="Farfan D."/>
            <person name="Frise E."/>
            <person name="George R.A."/>
            <person name="Gonzalez M."/>
            <person name="Guarin H."/>
            <person name="Kronmiller B."/>
            <person name="Li P.W."/>
            <person name="Liao G."/>
            <person name="Miranda A."/>
            <person name="Mungall C.J."/>
            <person name="Nunoo J."/>
            <person name="Pacleb J.M."/>
            <person name="Paragas V."/>
            <person name="Park S."/>
            <person name="Patel S."/>
            <person name="Phouanenavong S."/>
            <person name="Wan K.H."/>
            <person name="Yu C."/>
            <person name="Lewis S.E."/>
            <person name="Rubin G.M."/>
            <person name="Celniker S.E."/>
        </authorList>
    </citation>
    <scope>NUCLEOTIDE SEQUENCE [LARGE SCALE MRNA]</scope>
    <source>
        <strain>Berkeley</strain>
        <tissue>Embryo</tissue>
    </source>
</reference>